<accession>P0DSP0</accession>
<comment type="function">
    <text evidence="2">Component of triglyceride-rich very low density lipoproteins (VLDL) and high density lipoproteins (HDL) in plasma (By similarity). Plays a multifaceted role in triglyceride homeostasis (By similarity). Intracellularly, promotes hepatic very low density lipoprotein 1 (VLDL1) assembly and secretion; extracellularly, attenuates hydrolysis and clearance of triglyceride-rich lipoproteins (TRLs) (By similarity). Impairs the lipolysis of TRLs by inhibiting lipoprotein lipase and the hepatic uptake of TRLs by remnant receptors (By similarity). Formed of several curved helices connected via semiflexible hinges, so that it can wrap tightly around the curved micelle surface and easily adapt to the different diameters of its natural binding partners (By similarity).</text>
</comment>
<comment type="subcellular location">
    <subcellularLocation>
        <location evidence="2">Secreted</location>
    </subcellularLocation>
</comment>
<comment type="PTM">
    <text evidence="2">The most abundant glycoforms are characterized by an O-linked disaccharide galactose linked to N-acetylgalactosamine (Gal-GalNAc), further modified with up to 3 sialic acid residues (By similarity). Less abundant glycoforms are characterized by more complex and fucosylated glycan moieties (By similarity). O-glycosylated on Thr-94 with a core 1 or possibly core 8 glycan (By similarity).</text>
</comment>
<comment type="similarity">
    <text evidence="4">Belongs to the apolipoprotein C3 family.</text>
</comment>
<protein>
    <recommendedName>
        <fullName>Apolipoprotein C-III</fullName>
        <shortName>Apo-CIII</shortName>
        <shortName>ApoC-III</shortName>
    </recommendedName>
    <alternativeName>
        <fullName>Apolipoprotein C3</fullName>
    </alternativeName>
</protein>
<keyword id="KW-0162">Chylomicron</keyword>
<keyword id="KW-0325">Glycoprotein</keyword>
<keyword id="KW-0442">Lipid degradation</keyword>
<keyword id="KW-0443">Lipid metabolism</keyword>
<keyword id="KW-0445">Lipid transport</keyword>
<keyword id="KW-1185">Reference proteome</keyword>
<keyword id="KW-0964">Secreted</keyword>
<keyword id="KW-0730">Sialic acid</keyword>
<keyword id="KW-0732">Signal</keyword>
<keyword id="KW-0813">Transport</keyword>
<keyword id="KW-0850">VLDL</keyword>
<organism>
    <name type="scientific">Acinonyx jubatus</name>
    <name type="common">Cheetah</name>
    <dbReference type="NCBI Taxonomy" id="32536"/>
    <lineage>
        <taxon>Eukaryota</taxon>
        <taxon>Metazoa</taxon>
        <taxon>Chordata</taxon>
        <taxon>Craniata</taxon>
        <taxon>Vertebrata</taxon>
        <taxon>Euteleostomi</taxon>
        <taxon>Mammalia</taxon>
        <taxon>Eutheria</taxon>
        <taxon>Laurasiatheria</taxon>
        <taxon>Carnivora</taxon>
        <taxon>Feliformia</taxon>
        <taxon>Felidae</taxon>
        <taxon>Felinae</taxon>
        <taxon>Acinonyx</taxon>
    </lineage>
</organism>
<gene>
    <name type="primary">APOC3</name>
</gene>
<reference key="1">
    <citation type="submission" date="2018-10" db="EMBL/GenBank/DDBJ databases">
        <title>Linked reads assembly of the African cheetah.</title>
        <authorList>
            <person name="Scott A."/>
            <person name="Pukazhenthi B."/>
            <person name="Koepfli K.-P."/>
            <person name="Mohr D."/>
            <person name="Crosier A."/>
            <person name="O'Brien S.J."/>
            <person name="Tamazian G."/>
            <person name="Dobrynin P."/>
            <person name="Komissarov A."/>
            <person name="Kliver S."/>
            <person name="Krasheninnikova K."/>
        </authorList>
    </citation>
    <scope>NUCLEOTIDE SEQUENCE [LARGE SCALE GENOMIC DNA]</scope>
</reference>
<reference key="2">
    <citation type="unpublished observations" date="2019-06">
        <authorList>
            <person name="Puppione D.L."/>
        </authorList>
    </citation>
    <scope>IDENTIFICATION</scope>
</reference>
<evidence type="ECO:0000250" key="1"/>
<evidence type="ECO:0000250" key="2">
    <source>
        <dbReference type="UniProtKB" id="P02656"/>
    </source>
</evidence>
<evidence type="ECO:0000255" key="3"/>
<evidence type="ECO:0000305" key="4"/>
<dbReference type="EMBL" id="QURD01003265">
    <property type="status" value="NOT_ANNOTATED_CDS"/>
    <property type="molecule type" value="Genomic_DNA"/>
</dbReference>
<dbReference type="RefSeq" id="XP_014917961.2">
    <property type="nucleotide sequence ID" value="XM_015062475.3"/>
</dbReference>
<dbReference type="RefSeq" id="XP_014917971.2">
    <property type="nucleotide sequence ID" value="XM_015062485.3"/>
</dbReference>
<dbReference type="RefSeq" id="XP_026892384.1">
    <property type="nucleotide sequence ID" value="XM_027036583.2"/>
</dbReference>
<dbReference type="RefSeq" id="XP_053060046.1">
    <property type="nucleotide sequence ID" value="XM_053204071.1"/>
</dbReference>
<dbReference type="SMR" id="P0DSP0"/>
<dbReference type="GlyCosmos" id="P0DSP0">
    <property type="glycosylation" value="1 site, No reported glycans"/>
</dbReference>
<dbReference type="GeneID" id="106966365"/>
<dbReference type="Proteomes" id="UP000504626">
    <property type="component" value="Unplaced"/>
</dbReference>
<dbReference type="GO" id="GO:0042627">
    <property type="term" value="C:chylomicron"/>
    <property type="evidence" value="ECO:0007669"/>
    <property type="project" value="UniProtKB-KW"/>
</dbReference>
<dbReference type="GO" id="GO:0034363">
    <property type="term" value="C:intermediate-density lipoprotein particle"/>
    <property type="evidence" value="ECO:0007669"/>
    <property type="project" value="TreeGrafter"/>
</dbReference>
<dbReference type="GO" id="GO:0034366">
    <property type="term" value="C:spherical high-density lipoprotein particle"/>
    <property type="evidence" value="ECO:0007669"/>
    <property type="project" value="TreeGrafter"/>
</dbReference>
<dbReference type="GO" id="GO:0034361">
    <property type="term" value="C:very-low-density lipoprotein particle"/>
    <property type="evidence" value="ECO:0007669"/>
    <property type="project" value="UniProtKB-KW"/>
</dbReference>
<dbReference type="GO" id="GO:0070653">
    <property type="term" value="F:high-density lipoprotein particle receptor binding"/>
    <property type="evidence" value="ECO:0007669"/>
    <property type="project" value="TreeGrafter"/>
</dbReference>
<dbReference type="GO" id="GO:0055102">
    <property type="term" value="F:lipase inhibitor activity"/>
    <property type="evidence" value="ECO:0007669"/>
    <property type="project" value="TreeGrafter"/>
</dbReference>
<dbReference type="GO" id="GO:0005543">
    <property type="term" value="F:phospholipid binding"/>
    <property type="evidence" value="ECO:0007669"/>
    <property type="project" value="TreeGrafter"/>
</dbReference>
<dbReference type="GO" id="GO:0042632">
    <property type="term" value="P:cholesterol homeostasis"/>
    <property type="evidence" value="ECO:0007669"/>
    <property type="project" value="TreeGrafter"/>
</dbReference>
<dbReference type="GO" id="GO:0016042">
    <property type="term" value="P:lipid catabolic process"/>
    <property type="evidence" value="ECO:0007669"/>
    <property type="project" value="UniProtKB-KW"/>
</dbReference>
<dbReference type="GO" id="GO:0006869">
    <property type="term" value="P:lipid transport"/>
    <property type="evidence" value="ECO:0007669"/>
    <property type="project" value="UniProtKB-KW"/>
</dbReference>
<dbReference type="GO" id="GO:0042157">
    <property type="term" value="P:lipoprotein metabolic process"/>
    <property type="evidence" value="ECO:0007669"/>
    <property type="project" value="InterPro"/>
</dbReference>
<dbReference type="GO" id="GO:0010987">
    <property type="term" value="P:negative regulation of high-density lipoprotein particle clearance"/>
    <property type="evidence" value="ECO:0007669"/>
    <property type="project" value="TreeGrafter"/>
</dbReference>
<dbReference type="GO" id="GO:0010989">
    <property type="term" value="P:negative regulation of low-density lipoprotein particle clearance"/>
    <property type="evidence" value="ECO:0007669"/>
    <property type="project" value="TreeGrafter"/>
</dbReference>
<dbReference type="GO" id="GO:0010897">
    <property type="term" value="P:negative regulation of triglyceride catabolic process"/>
    <property type="evidence" value="ECO:0007669"/>
    <property type="project" value="TreeGrafter"/>
</dbReference>
<dbReference type="GO" id="GO:0010916">
    <property type="term" value="P:negative regulation of very-low-density lipoprotein particle clearance"/>
    <property type="evidence" value="ECO:0007669"/>
    <property type="project" value="TreeGrafter"/>
</dbReference>
<dbReference type="GO" id="GO:0070328">
    <property type="term" value="P:triglyceride homeostasis"/>
    <property type="evidence" value="ECO:0007669"/>
    <property type="project" value="TreeGrafter"/>
</dbReference>
<dbReference type="Gene3D" id="6.10.90.10">
    <property type="entry name" value="Apolipoprotein CIII"/>
    <property type="match status" value="1"/>
</dbReference>
<dbReference type="InterPro" id="IPR008403">
    <property type="entry name" value="Apo-CIII"/>
</dbReference>
<dbReference type="InterPro" id="IPR038195">
    <property type="entry name" value="Apo_CIII_sf"/>
</dbReference>
<dbReference type="PANTHER" id="PTHR14225">
    <property type="entry name" value="APOLIPOPROTEIN C-III"/>
    <property type="match status" value="1"/>
</dbReference>
<dbReference type="PANTHER" id="PTHR14225:SF0">
    <property type="entry name" value="APOLIPOPROTEIN C-III"/>
    <property type="match status" value="1"/>
</dbReference>
<dbReference type="Pfam" id="PF05778">
    <property type="entry name" value="Apo-CIII"/>
    <property type="match status" value="1"/>
</dbReference>
<feature type="signal peptide" evidence="3">
    <location>
        <begin position="1"/>
        <end position="20"/>
    </location>
</feature>
<feature type="chain" id="PRO_0000447663" description="Apolipoprotein C-III">
    <location>
        <begin position="21"/>
        <end position="100"/>
    </location>
</feature>
<feature type="region of interest" description="Lipid-binding" evidence="1">
    <location>
        <begin position="68"/>
        <end position="100"/>
    </location>
</feature>
<feature type="site" description="May interact with the LDL receptor" evidence="2">
    <location>
        <position position="41"/>
    </location>
</feature>
<feature type="glycosylation site" description="O-linked (GalNAc...) threonine" evidence="2">
    <location>
        <position position="94"/>
    </location>
</feature>
<name>APOC3_ACIJB</name>
<sequence length="100" mass="10977">MQSRVLLVTALLVLLASARATEGEDPSLLGLMHGYVQHATKTAQDTLTTVREFPVAQQARDWVTGRFTSLKDYWSTLTGKFSGFWDSTFAVTPTPASEAK</sequence>
<proteinExistence type="inferred from homology"/>